<dbReference type="EC" id="3.1.1.96" evidence="1"/>
<dbReference type="EMBL" id="AM933173">
    <property type="protein sequence ID" value="CAR39188.1"/>
    <property type="molecule type" value="Genomic_DNA"/>
</dbReference>
<dbReference type="RefSeq" id="WP_000560968.1">
    <property type="nucleotide sequence ID" value="NC_011274.1"/>
</dbReference>
<dbReference type="SMR" id="B5RFE5"/>
<dbReference type="KEGG" id="seg:SG3397"/>
<dbReference type="HOGENOM" id="CLU_076901_1_0_6"/>
<dbReference type="Proteomes" id="UP000008321">
    <property type="component" value="Chromosome"/>
</dbReference>
<dbReference type="GO" id="GO:0005737">
    <property type="term" value="C:cytoplasm"/>
    <property type="evidence" value="ECO:0007669"/>
    <property type="project" value="UniProtKB-SubCell"/>
</dbReference>
<dbReference type="GO" id="GO:0051500">
    <property type="term" value="F:D-tyrosyl-tRNA(Tyr) deacylase activity"/>
    <property type="evidence" value="ECO:0007669"/>
    <property type="project" value="TreeGrafter"/>
</dbReference>
<dbReference type="GO" id="GO:0106026">
    <property type="term" value="F:Gly-tRNA(Ala) deacylase activity"/>
    <property type="evidence" value="ECO:0007669"/>
    <property type="project" value="UniProtKB-UniRule"/>
</dbReference>
<dbReference type="GO" id="GO:0043908">
    <property type="term" value="F:Ser(Gly)-tRNA(Ala) hydrolase activity"/>
    <property type="evidence" value="ECO:0007669"/>
    <property type="project" value="UniProtKB-UniRule"/>
</dbReference>
<dbReference type="GO" id="GO:0000049">
    <property type="term" value="F:tRNA binding"/>
    <property type="evidence" value="ECO:0007669"/>
    <property type="project" value="UniProtKB-UniRule"/>
</dbReference>
<dbReference type="GO" id="GO:0019478">
    <property type="term" value="P:D-amino acid catabolic process"/>
    <property type="evidence" value="ECO:0007669"/>
    <property type="project" value="UniProtKB-UniRule"/>
</dbReference>
<dbReference type="CDD" id="cd00563">
    <property type="entry name" value="Dtyr_deacylase"/>
    <property type="match status" value="1"/>
</dbReference>
<dbReference type="FunFam" id="3.50.80.10:FF:000001">
    <property type="entry name" value="D-aminoacyl-tRNA deacylase"/>
    <property type="match status" value="1"/>
</dbReference>
<dbReference type="Gene3D" id="3.50.80.10">
    <property type="entry name" value="D-tyrosyl-tRNA(Tyr) deacylase"/>
    <property type="match status" value="1"/>
</dbReference>
<dbReference type="HAMAP" id="MF_00518">
    <property type="entry name" value="Deacylase_Dtd"/>
    <property type="match status" value="1"/>
</dbReference>
<dbReference type="InterPro" id="IPR003732">
    <property type="entry name" value="Daa-tRNA_deacyls_DTD"/>
</dbReference>
<dbReference type="InterPro" id="IPR023509">
    <property type="entry name" value="DTD-like_sf"/>
</dbReference>
<dbReference type="NCBIfam" id="TIGR00256">
    <property type="entry name" value="D-aminoacyl-tRNA deacylase"/>
    <property type="match status" value="1"/>
</dbReference>
<dbReference type="PANTHER" id="PTHR10472:SF5">
    <property type="entry name" value="D-AMINOACYL-TRNA DEACYLASE 1"/>
    <property type="match status" value="1"/>
</dbReference>
<dbReference type="PANTHER" id="PTHR10472">
    <property type="entry name" value="D-TYROSYL-TRNA TYR DEACYLASE"/>
    <property type="match status" value="1"/>
</dbReference>
<dbReference type="Pfam" id="PF02580">
    <property type="entry name" value="Tyr_Deacylase"/>
    <property type="match status" value="1"/>
</dbReference>
<dbReference type="SUPFAM" id="SSF69500">
    <property type="entry name" value="DTD-like"/>
    <property type="match status" value="1"/>
</dbReference>
<gene>
    <name evidence="1" type="primary">dtd</name>
    <name type="ordered locus">SG3397</name>
</gene>
<organism>
    <name type="scientific">Salmonella gallinarum (strain 287/91 / NCTC 13346)</name>
    <dbReference type="NCBI Taxonomy" id="550538"/>
    <lineage>
        <taxon>Bacteria</taxon>
        <taxon>Pseudomonadati</taxon>
        <taxon>Pseudomonadota</taxon>
        <taxon>Gammaproteobacteria</taxon>
        <taxon>Enterobacterales</taxon>
        <taxon>Enterobacteriaceae</taxon>
        <taxon>Salmonella</taxon>
    </lineage>
</organism>
<protein>
    <recommendedName>
        <fullName evidence="1">D-aminoacyl-tRNA deacylase</fullName>
        <shortName evidence="1">DTD</shortName>
        <ecNumber evidence="1">3.1.1.96</ecNumber>
    </recommendedName>
    <alternativeName>
        <fullName evidence="1">Gly-tRNA(Ala) deacylase</fullName>
    </alternativeName>
</protein>
<reference key="1">
    <citation type="journal article" date="2008" name="Genome Res.">
        <title>Comparative genome analysis of Salmonella enteritidis PT4 and Salmonella gallinarum 287/91 provides insights into evolutionary and host adaptation pathways.</title>
        <authorList>
            <person name="Thomson N.R."/>
            <person name="Clayton D.J."/>
            <person name="Windhorst D."/>
            <person name="Vernikos G."/>
            <person name="Davidson S."/>
            <person name="Churcher C."/>
            <person name="Quail M.A."/>
            <person name="Stevens M."/>
            <person name="Jones M.A."/>
            <person name="Watson M."/>
            <person name="Barron A."/>
            <person name="Layton A."/>
            <person name="Pickard D."/>
            <person name="Kingsley R.A."/>
            <person name="Bignell A."/>
            <person name="Clark L."/>
            <person name="Harris B."/>
            <person name="Ormond D."/>
            <person name="Abdellah Z."/>
            <person name="Brooks K."/>
            <person name="Cherevach I."/>
            <person name="Chillingworth T."/>
            <person name="Woodward J."/>
            <person name="Norberczak H."/>
            <person name="Lord A."/>
            <person name="Arrowsmith C."/>
            <person name="Jagels K."/>
            <person name="Moule S."/>
            <person name="Mungall K."/>
            <person name="Saunders M."/>
            <person name="Whitehead S."/>
            <person name="Chabalgoity J.A."/>
            <person name="Maskell D."/>
            <person name="Humphreys T."/>
            <person name="Roberts M."/>
            <person name="Barrow P.A."/>
            <person name="Dougan G."/>
            <person name="Parkhill J."/>
        </authorList>
    </citation>
    <scope>NUCLEOTIDE SEQUENCE [LARGE SCALE GENOMIC DNA]</scope>
    <source>
        <strain>287/91 / NCTC 13346</strain>
    </source>
</reference>
<comment type="function">
    <text evidence="1">An aminoacyl-tRNA editing enzyme that deacylates mischarged D-aminoacyl-tRNAs. Also deacylates mischarged glycyl-tRNA(Ala), protecting cells against glycine mischarging by AlaRS. Acts via tRNA-based rather than protein-based catalysis; rejects L-amino acids rather than detecting D-amino acids in the active site. By recycling D-aminoacyl-tRNA to D-amino acids and free tRNA molecules, this enzyme counteracts the toxicity associated with the formation of D-aminoacyl-tRNA entities in vivo and helps enforce protein L-homochirality.</text>
</comment>
<comment type="catalytic activity">
    <reaction evidence="1">
        <text>glycyl-tRNA(Ala) + H2O = tRNA(Ala) + glycine + H(+)</text>
        <dbReference type="Rhea" id="RHEA:53744"/>
        <dbReference type="Rhea" id="RHEA-COMP:9657"/>
        <dbReference type="Rhea" id="RHEA-COMP:13640"/>
        <dbReference type="ChEBI" id="CHEBI:15377"/>
        <dbReference type="ChEBI" id="CHEBI:15378"/>
        <dbReference type="ChEBI" id="CHEBI:57305"/>
        <dbReference type="ChEBI" id="CHEBI:78442"/>
        <dbReference type="ChEBI" id="CHEBI:78522"/>
        <dbReference type="EC" id="3.1.1.96"/>
    </reaction>
</comment>
<comment type="catalytic activity">
    <reaction evidence="1">
        <text>a D-aminoacyl-tRNA + H2O = a tRNA + a D-alpha-amino acid + H(+)</text>
        <dbReference type="Rhea" id="RHEA:13953"/>
        <dbReference type="Rhea" id="RHEA-COMP:10123"/>
        <dbReference type="Rhea" id="RHEA-COMP:10124"/>
        <dbReference type="ChEBI" id="CHEBI:15377"/>
        <dbReference type="ChEBI" id="CHEBI:15378"/>
        <dbReference type="ChEBI" id="CHEBI:59871"/>
        <dbReference type="ChEBI" id="CHEBI:78442"/>
        <dbReference type="ChEBI" id="CHEBI:79333"/>
        <dbReference type="EC" id="3.1.1.96"/>
    </reaction>
</comment>
<comment type="subunit">
    <text evidence="1">Homodimer.</text>
</comment>
<comment type="subcellular location">
    <subcellularLocation>
        <location evidence="1">Cytoplasm</location>
    </subcellularLocation>
</comment>
<comment type="domain">
    <text evidence="1">A Gly-cisPro motif from one monomer fits into the active site of the other monomer to allow specific chiral rejection of L-amino acids.</text>
</comment>
<comment type="similarity">
    <text evidence="1">Belongs to the DTD family.</text>
</comment>
<feature type="chain" id="PRO_1000127568" description="D-aminoacyl-tRNA deacylase">
    <location>
        <begin position="1"/>
        <end position="145"/>
    </location>
</feature>
<feature type="short sequence motif" description="Gly-cisPro motif, important for rejection of L-amino acids" evidence="1">
    <location>
        <begin position="137"/>
        <end position="138"/>
    </location>
</feature>
<keyword id="KW-0963">Cytoplasm</keyword>
<keyword id="KW-0378">Hydrolase</keyword>
<keyword id="KW-0694">RNA-binding</keyword>
<keyword id="KW-0820">tRNA-binding</keyword>
<proteinExistence type="inferred from homology"/>
<accession>B5RFE5</accession>
<name>DTD_SALG2</name>
<sequence>MIALIQRVTRASVTVEDEVTGEIGPGLLVLLGVEKEDDEQKANRLCERVLGYRIFSDADGKMNLNVQQAGGSVLVVSQFTLAADTERGMRPSFSGGAAPDRAQALYEYFVERCRQQAIDTQTGRFAADMQVELVNDGPVTFWLQV</sequence>
<evidence type="ECO:0000255" key="1">
    <source>
        <dbReference type="HAMAP-Rule" id="MF_00518"/>
    </source>
</evidence>